<feature type="chain" id="PRO_0000391589" description="CASP-like protein 4B4">
    <location>
        <begin position="1"/>
        <end position="204"/>
    </location>
</feature>
<feature type="topological domain" description="Cytoplasmic" evidence="2">
    <location>
        <begin position="1"/>
        <end position="60"/>
    </location>
</feature>
<feature type="transmembrane region" description="Helical" evidence="2">
    <location>
        <begin position="61"/>
        <end position="81"/>
    </location>
</feature>
<feature type="topological domain" description="Extracellular" evidence="2">
    <location>
        <begin position="82"/>
        <end position="98"/>
    </location>
</feature>
<feature type="transmembrane region" description="Helical" evidence="2">
    <location>
        <begin position="99"/>
        <end position="119"/>
    </location>
</feature>
<feature type="topological domain" description="Cytoplasmic" evidence="2">
    <location>
        <begin position="120"/>
        <end position="130"/>
    </location>
</feature>
<feature type="transmembrane region" description="Helical" evidence="2">
    <location>
        <begin position="131"/>
        <end position="151"/>
    </location>
</feature>
<feature type="topological domain" description="Extracellular" evidence="2">
    <location>
        <begin position="152"/>
        <end position="175"/>
    </location>
</feature>
<feature type="transmembrane region" description="Helical" evidence="2">
    <location>
        <begin position="176"/>
        <end position="196"/>
    </location>
</feature>
<feature type="topological domain" description="Cytoplasmic" evidence="2">
    <location>
        <begin position="197"/>
        <end position="204"/>
    </location>
</feature>
<reference key="1">
    <citation type="journal article" date="2005" name="Mol. Genet. Genomics">
        <title>A fine physical map of the rice chromosome 5.</title>
        <authorList>
            <person name="Cheng C.-H."/>
            <person name="Chung M.C."/>
            <person name="Liu S.-M."/>
            <person name="Chen S.-K."/>
            <person name="Kao F.Y."/>
            <person name="Lin S.-J."/>
            <person name="Hsiao S.-H."/>
            <person name="Tseng I.C."/>
            <person name="Hsing Y.-I.C."/>
            <person name="Wu H.-P."/>
            <person name="Chen C.-S."/>
            <person name="Shaw J.-F."/>
            <person name="Wu J."/>
            <person name="Matsumoto T."/>
            <person name="Sasaki T."/>
            <person name="Chen H.-C."/>
            <person name="Chow T.-Y."/>
        </authorList>
    </citation>
    <scope>NUCLEOTIDE SEQUENCE [LARGE SCALE GENOMIC DNA]</scope>
    <source>
        <strain>cv. Nipponbare</strain>
    </source>
</reference>
<reference key="2">
    <citation type="journal article" date="2005" name="Nature">
        <title>The map-based sequence of the rice genome.</title>
        <authorList>
            <consortium name="International rice genome sequencing project (IRGSP)"/>
        </authorList>
    </citation>
    <scope>NUCLEOTIDE SEQUENCE [LARGE SCALE GENOMIC DNA]</scope>
    <source>
        <strain>cv. Nipponbare</strain>
    </source>
</reference>
<reference key="3">
    <citation type="journal article" date="2008" name="Nucleic Acids Res.">
        <title>The rice annotation project database (RAP-DB): 2008 update.</title>
        <authorList>
            <consortium name="The rice annotation project (RAP)"/>
        </authorList>
    </citation>
    <scope>GENOME REANNOTATION</scope>
    <source>
        <strain>cv. Nipponbare</strain>
    </source>
</reference>
<reference key="4">
    <citation type="journal article" date="2013" name="Rice">
        <title>Improvement of the Oryza sativa Nipponbare reference genome using next generation sequence and optical map data.</title>
        <authorList>
            <person name="Kawahara Y."/>
            <person name="de la Bastide M."/>
            <person name="Hamilton J.P."/>
            <person name="Kanamori H."/>
            <person name="McCombie W.R."/>
            <person name="Ouyang S."/>
            <person name="Schwartz D.C."/>
            <person name="Tanaka T."/>
            <person name="Wu J."/>
            <person name="Zhou S."/>
            <person name="Childs K.L."/>
            <person name="Davidson R.M."/>
            <person name="Lin H."/>
            <person name="Quesada-Ocampo L."/>
            <person name="Vaillancourt B."/>
            <person name="Sakai H."/>
            <person name="Lee S.S."/>
            <person name="Kim J."/>
            <person name="Numa H."/>
            <person name="Itoh T."/>
            <person name="Buell C.R."/>
            <person name="Matsumoto T."/>
        </authorList>
    </citation>
    <scope>GENOME REANNOTATION</scope>
    <source>
        <strain>cv. Nipponbare</strain>
    </source>
</reference>
<reference key="5">
    <citation type="journal article" date="2014" name="Plant Physiol.">
        <title>Functional and evolutionary analysis of the CASPARIAN STRIP MEMBRANE DOMAIN PROTEIN family.</title>
        <authorList>
            <person name="Roppolo D."/>
            <person name="Boeckmann B."/>
            <person name="Pfister A."/>
            <person name="Boutet E."/>
            <person name="Rubio M.C."/>
            <person name="Denervaud-Tendon V."/>
            <person name="Vermeer J.E."/>
            <person name="Gheyselinck J."/>
            <person name="Xenarios I."/>
            <person name="Geldner N."/>
        </authorList>
    </citation>
    <scope>GENE FAMILY</scope>
    <scope>NOMENCLATURE</scope>
</reference>
<sequence length="204" mass="21310">MSAAVAASSGAPAADVEKGAAAADANVDGGGAPAAAAASGEGVVSAVVRRWRRQDLLEKSGSALRVAAWAFSLLAFVVMGANDHGDWRQFEHYEEYRYVVAIGVLAFIYTTLQLVRHGVRLTGGQDLQGKVAVLVDFAGDQVTAYLLMSAVSAAIPITNRMREGADNVFTDSSAASISMAFFAFLCLALSALVSGFKLAKQTYI</sequence>
<keyword id="KW-1003">Cell membrane</keyword>
<keyword id="KW-0472">Membrane</keyword>
<keyword id="KW-1185">Reference proteome</keyword>
<keyword id="KW-0812">Transmembrane</keyword>
<keyword id="KW-1133">Transmembrane helix</keyword>
<comment type="subunit">
    <text evidence="1">Homodimer and heterodimers.</text>
</comment>
<comment type="subcellular location">
    <subcellularLocation>
        <location evidence="1">Cell membrane</location>
        <topology evidence="1">Multi-pass membrane protein</topology>
    </subcellularLocation>
</comment>
<comment type="similarity">
    <text evidence="3">Belongs to the Casparian strip membrane proteins (CASP) family.</text>
</comment>
<protein>
    <recommendedName>
        <fullName>CASP-like protein 4B4</fullName>
        <shortName>OsCASPL4B4</shortName>
    </recommendedName>
</protein>
<proteinExistence type="inferred from homology"/>
<gene>
    <name type="ordered locus">Os05g0344400</name>
    <name type="ordered locus">LOC_Os05g27790</name>
    <name type="ORF">B1036C05.1</name>
    <name type="ORF">P0015F11.14</name>
</gene>
<name>CSPLG_ORYSJ</name>
<organism>
    <name type="scientific">Oryza sativa subsp. japonica</name>
    <name type="common">Rice</name>
    <dbReference type="NCBI Taxonomy" id="39947"/>
    <lineage>
        <taxon>Eukaryota</taxon>
        <taxon>Viridiplantae</taxon>
        <taxon>Streptophyta</taxon>
        <taxon>Embryophyta</taxon>
        <taxon>Tracheophyta</taxon>
        <taxon>Spermatophyta</taxon>
        <taxon>Magnoliopsida</taxon>
        <taxon>Liliopsida</taxon>
        <taxon>Poales</taxon>
        <taxon>Poaceae</taxon>
        <taxon>BOP clade</taxon>
        <taxon>Oryzoideae</taxon>
        <taxon>Oryzeae</taxon>
        <taxon>Oryzinae</taxon>
        <taxon>Oryza</taxon>
        <taxon>Oryza sativa</taxon>
    </lineage>
</organism>
<dbReference type="EMBL" id="AC134927">
    <property type="protein sequence ID" value="AAV43796.1"/>
    <property type="molecule type" value="Genomic_DNA"/>
</dbReference>
<dbReference type="EMBL" id="AC135424">
    <property type="protein sequence ID" value="AAV44168.1"/>
    <property type="molecule type" value="Genomic_DNA"/>
</dbReference>
<dbReference type="EMBL" id="AP008211">
    <property type="protein sequence ID" value="BAF17168.1"/>
    <property type="molecule type" value="Genomic_DNA"/>
</dbReference>
<dbReference type="EMBL" id="AP014961">
    <property type="protein sequence ID" value="BAS93485.1"/>
    <property type="molecule type" value="Genomic_DNA"/>
</dbReference>
<dbReference type="RefSeq" id="XP_015638026.1">
    <property type="nucleotide sequence ID" value="XM_015782540.1"/>
</dbReference>
<dbReference type="SMR" id="Q5W6M3"/>
<dbReference type="FunCoup" id="Q5W6M3">
    <property type="interactions" value="1261"/>
</dbReference>
<dbReference type="PaxDb" id="39947-Q5W6M3"/>
<dbReference type="EnsemblPlants" id="Os05t0344400-01">
    <property type="protein sequence ID" value="Os05t0344400-01"/>
    <property type="gene ID" value="Os05g0344400"/>
</dbReference>
<dbReference type="Gramene" id="Os05t0344400-01">
    <property type="protein sequence ID" value="Os05t0344400-01"/>
    <property type="gene ID" value="Os05g0344400"/>
</dbReference>
<dbReference type="KEGG" id="dosa:Os05g0344400"/>
<dbReference type="eggNOG" id="ENOG502RYC3">
    <property type="taxonomic scope" value="Eukaryota"/>
</dbReference>
<dbReference type="HOGENOM" id="CLU_048961_4_1_1"/>
<dbReference type="InParanoid" id="Q5W6M3"/>
<dbReference type="OMA" id="RMRESQD"/>
<dbReference type="OrthoDB" id="1924823at2759"/>
<dbReference type="Proteomes" id="UP000000763">
    <property type="component" value="Chromosome 5"/>
</dbReference>
<dbReference type="Proteomes" id="UP000059680">
    <property type="component" value="Chromosome 5"/>
</dbReference>
<dbReference type="GO" id="GO:0005886">
    <property type="term" value="C:plasma membrane"/>
    <property type="evidence" value="ECO:0007669"/>
    <property type="project" value="UniProtKB-SubCell"/>
</dbReference>
<dbReference type="InterPro" id="IPR006702">
    <property type="entry name" value="CASP_dom"/>
</dbReference>
<dbReference type="PANTHER" id="PTHR33573">
    <property type="entry name" value="CASP-LIKE PROTEIN 4A4"/>
    <property type="match status" value="1"/>
</dbReference>
<dbReference type="PANTHER" id="PTHR33573:SF57">
    <property type="entry name" value="CASP-LIKE PROTEIN 4B1"/>
    <property type="match status" value="1"/>
</dbReference>
<dbReference type="Pfam" id="PF04535">
    <property type="entry name" value="CASP_dom"/>
    <property type="match status" value="1"/>
</dbReference>
<evidence type="ECO:0000250" key="1"/>
<evidence type="ECO:0000255" key="2"/>
<evidence type="ECO:0000305" key="3"/>
<accession>Q5W6M3</accession>
<accession>A0A0P0WL88</accession>